<gene>
    <name evidence="1" type="primary">xerD</name>
    <name type="ordered locus">RBE_1002</name>
</gene>
<reference key="1">
    <citation type="journal article" date="2006" name="PLoS Genet.">
        <title>Genome sequence of Rickettsia bellii illuminates the role of amoebae in gene exchanges between intracellular pathogens.</title>
        <authorList>
            <person name="Ogata H."/>
            <person name="La Scola B."/>
            <person name="Audic S."/>
            <person name="Renesto P."/>
            <person name="Blanc G."/>
            <person name="Robert C."/>
            <person name="Fournier P.-E."/>
            <person name="Claverie J.-M."/>
            <person name="Raoult D."/>
        </authorList>
    </citation>
    <scope>NUCLEOTIDE SEQUENCE [LARGE SCALE GENOMIC DNA]</scope>
    <source>
        <strain>RML369-C</strain>
    </source>
</reference>
<comment type="function">
    <text evidence="1">Site-specific tyrosine recombinase, which acts by catalyzing the cutting and rejoining of the recombining DNA molecules. The XerC-XerD complex is essential to convert dimers of the bacterial chromosome into monomers to permit their segregation at cell division. It also contributes to the segregational stability of plasmids.</text>
</comment>
<comment type="subunit">
    <text evidence="1">Forms a cyclic heterotetrameric complex composed of two molecules of XerC and two molecules of XerD.</text>
</comment>
<comment type="subcellular location">
    <subcellularLocation>
        <location evidence="1">Cytoplasm</location>
    </subcellularLocation>
</comment>
<comment type="similarity">
    <text evidence="1">Belongs to the 'phage' integrase family. XerD subfamily.</text>
</comment>
<evidence type="ECO:0000255" key="1">
    <source>
        <dbReference type="HAMAP-Rule" id="MF_01807"/>
    </source>
</evidence>
<evidence type="ECO:0000255" key="2">
    <source>
        <dbReference type="PROSITE-ProRule" id="PRU01246"/>
    </source>
</evidence>
<evidence type="ECO:0000255" key="3">
    <source>
        <dbReference type="PROSITE-ProRule" id="PRU01248"/>
    </source>
</evidence>
<feature type="chain" id="PRO_0000272368" description="Tyrosine recombinase XerD">
    <location>
        <begin position="1"/>
        <end position="305"/>
    </location>
</feature>
<feature type="domain" description="Core-binding (CB)" evidence="3">
    <location>
        <begin position="1"/>
        <end position="83"/>
    </location>
</feature>
<feature type="domain" description="Tyr recombinase" evidence="2">
    <location>
        <begin position="104"/>
        <end position="298"/>
    </location>
</feature>
<feature type="active site" evidence="1">
    <location>
        <position position="145"/>
    </location>
</feature>
<feature type="active site" evidence="1">
    <location>
        <position position="175"/>
    </location>
</feature>
<feature type="active site" evidence="1">
    <location>
        <position position="250"/>
    </location>
</feature>
<feature type="active site" evidence="1">
    <location>
        <position position="253"/>
    </location>
</feature>
<feature type="active site" evidence="1">
    <location>
        <position position="276"/>
    </location>
</feature>
<feature type="active site" description="O-(3'-phospho-DNA)-tyrosine intermediate" evidence="1">
    <location>
        <position position="285"/>
    </location>
</feature>
<protein>
    <recommendedName>
        <fullName evidence="1">Tyrosine recombinase XerD</fullName>
    </recommendedName>
</protein>
<accession>Q1RHT1</accession>
<sequence length="305" mass="34689">MEFISQFLEMLLAERALSKNSILSYKRDLLDFHNYLAKQKLSELNITTDNIRNWVEYLAENSLQARSINRKISTIKSYYEFLISENHTNLNPLLNIDLPKYQNKLPEILSIDDIKSLLEYCSQDISPEGARLNAMIHLLYASGLRVSELVSLKLSDILSNKVSREVKKIFSVLGKGNKERIIVINEPAINSLVKYLVVRDNFVNKTKPKNLIYLFPSSAAAGYMTRQNFAILLKSAALYAGLNPEHISPHVLRHSFASHLLEGGADLRVIQELLGHADISTTQIYTHLQTNHLKKALLHHPLSKN</sequence>
<name>XERD_RICBR</name>
<dbReference type="EMBL" id="CP000087">
    <property type="protein sequence ID" value="ABE05083.1"/>
    <property type="molecule type" value="Genomic_DNA"/>
</dbReference>
<dbReference type="RefSeq" id="WP_011477663.1">
    <property type="nucleotide sequence ID" value="NC_007940.1"/>
</dbReference>
<dbReference type="SMR" id="Q1RHT1"/>
<dbReference type="KEGG" id="rbe:RBE_1002"/>
<dbReference type="eggNOG" id="COG4974">
    <property type="taxonomic scope" value="Bacteria"/>
</dbReference>
<dbReference type="HOGENOM" id="CLU_027562_9_0_5"/>
<dbReference type="OrthoDB" id="9801717at2"/>
<dbReference type="Proteomes" id="UP000001951">
    <property type="component" value="Chromosome"/>
</dbReference>
<dbReference type="GO" id="GO:0005737">
    <property type="term" value="C:cytoplasm"/>
    <property type="evidence" value="ECO:0007669"/>
    <property type="project" value="UniProtKB-SubCell"/>
</dbReference>
<dbReference type="GO" id="GO:0003677">
    <property type="term" value="F:DNA binding"/>
    <property type="evidence" value="ECO:0007669"/>
    <property type="project" value="UniProtKB-KW"/>
</dbReference>
<dbReference type="GO" id="GO:0009037">
    <property type="term" value="F:tyrosine-based site-specific recombinase activity"/>
    <property type="evidence" value="ECO:0007669"/>
    <property type="project" value="UniProtKB-UniRule"/>
</dbReference>
<dbReference type="GO" id="GO:0051301">
    <property type="term" value="P:cell division"/>
    <property type="evidence" value="ECO:0007669"/>
    <property type="project" value="UniProtKB-KW"/>
</dbReference>
<dbReference type="GO" id="GO:0007059">
    <property type="term" value="P:chromosome segregation"/>
    <property type="evidence" value="ECO:0007669"/>
    <property type="project" value="UniProtKB-UniRule"/>
</dbReference>
<dbReference type="GO" id="GO:0006313">
    <property type="term" value="P:DNA transposition"/>
    <property type="evidence" value="ECO:0007669"/>
    <property type="project" value="UniProtKB-UniRule"/>
</dbReference>
<dbReference type="CDD" id="cd00798">
    <property type="entry name" value="INT_XerDC_C"/>
    <property type="match status" value="1"/>
</dbReference>
<dbReference type="Gene3D" id="1.10.150.130">
    <property type="match status" value="1"/>
</dbReference>
<dbReference type="Gene3D" id="1.10.443.10">
    <property type="entry name" value="Intergrase catalytic core"/>
    <property type="match status" value="1"/>
</dbReference>
<dbReference type="HAMAP" id="MF_01808">
    <property type="entry name" value="Recomb_XerC_XerD"/>
    <property type="match status" value="1"/>
</dbReference>
<dbReference type="HAMAP" id="MF_01807">
    <property type="entry name" value="Recomb_XerD"/>
    <property type="match status" value="1"/>
</dbReference>
<dbReference type="InterPro" id="IPR044068">
    <property type="entry name" value="CB"/>
</dbReference>
<dbReference type="InterPro" id="IPR011010">
    <property type="entry name" value="DNA_brk_join_enz"/>
</dbReference>
<dbReference type="InterPro" id="IPR013762">
    <property type="entry name" value="Integrase-like_cat_sf"/>
</dbReference>
<dbReference type="InterPro" id="IPR002104">
    <property type="entry name" value="Integrase_catalytic"/>
</dbReference>
<dbReference type="InterPro" id="IPR010998">
    <property type="entry name" value="Integrase_recombinase_N"/>
</dbReference>
<dbReference type="InterPro" id="IPR004107">
    <property type="entry name" value="Integrase_SAM-like_N"/>
</dbReference>
<dbReference type="InterPro" id="IPR011932">
    <property type="entry name" value="Recomb_XerD"/>
</dbReference>
<dbReference type="InterPro" id="IPR023009">
    <property type="entry name" value="Tyrosine_recombinase_XerC/XerD"/>
</dbReference>
<dbReference type="InterPro" id="IPR050090">
    <property type="entry name" value="Tyrosine_recombinase_XerCD"/>
</dbReference>
<dbReference type="NCBIfam" id="NF001399">
    <property type="entry name" value="PRK00283.1"/>
    <property type="match status" value="1"/>
</dbReference>
<dbReference type="PANTHER" id="PTHR30349">
    <property type="entry name" value="PHAGE INTEGRASE-RELATED"/>
    <property type="match status" value="1"/>
</dbReference>
<dbReference type="PANTHER" id="PTHR30349:SF81">
    <property type="entry name" value="TYROSINE RECOMBINASE XERC"/>
    <property type="match status" value="1"/>
</dbReference>
<dbReference type="Pfam" id="PF02899">
    <property type="entry name" value="Phage_int_SAM_1"/>
    <property type="match status" value="1"/>
</dbReference>
<dbReference type="Pfam" id="PF00589">
    <property type="entry name" value="Phage_integrase"/>
    <property type="match status" value="1"/>
</dbReference>
<dbReference type="SUPFAM" id="SSF56349">
    <property type="entry name" value="DNA breaking-rejoining enzymes"/>
    <property type="match status" value="1"/>
</dbReference>
<dbReference type="PROSITE" id="PS51900">
    <property type="entry name" value="CB"/>
    <property type="match status" value="1"/>
</dbReference>
<dbReference type="PROSITE" id="PS51898">
    <property type="entry name" value="TYR_RECOMBINASE"/>
    <property type="match status" value="1"/>
</dbReference>
<proteinExistence type="inferred from homology"/>
<keyword id="KW-0131">Cell cycle</keyword>
<keyword id="KW-0132">Cell division</keyword>
<keyword id="KW-0159">Chromosome partition</keyword>
<keyword id="KW-0963">Cytoplasm</keyword>
<keyword id="KW-0229">DNA integration</keyword>
<keyword id="KW-0233">DNA recombination</keyword>
<keyword id="KW-0238">DNA-binding</keyword>
<organism>
    <name type="scientific">Rickettsia bellii (strain RML369-C)</name>
    <dbReference type="NCBI Taxonomy" id="336407"/>
    <lineage>
        <taxon>Bacteria</taxon>
        <taxon>Pseudomonadati</taxon>
        <taxon>Pseudomonadota</taxon>
        <taxon>Alphaproteobacteria</taxon>
        <taxon>Rickettsiales</taxon>
        <taxon>Rickettsiaceae</taxon>
        <taxon>Rickettsieae</taxon>
        <taxon>Rickettsia</taxon>
        <taxon>belli group</taxon>
    </lineage>
</organism>